<dbReference type="EC" id="2.4.2.9" evidence="1"/>
<dbReference type="EMBL" id="FM200053">
    <property type="protein sequence ID" value="CAR58467.1"/>
    <property type="molecule type" value="Genomic_DNA"/>
</dbReference>
<dbReference type="RefSeq" id="WP_000706208.1">
    <property type="nucleotide sequence ID" value="NC_011147.1"/>
</dbReference>
<dbReference type="SMR" id="B5BB06"/>
<dbReference type="KEGG" id="sek:SSPA0345"/>
<dbReference type="HOGENOM" id="CLU_067096_2_2_6"/>
<dbReference type="UniPathway" id="UPA00574">
    <property type="reaction ID" value="UER00636"/>
</dbReference>
<dbReference type="Proteomes" id="UP000001869">
    <property type="component" value="Chromosome"/>
</dbReference>
<dbReference type="GO" id="GO:0005525">
    <property type="term" value="F:GTP binding"/>
    <property type="evidence" value="ECO:0007669"/>
    <property type="project" value="UniProtKB-KW"/>
</dbReference>
<dbReference type="GO" id="GO:0000287">
    <property type="term" value="F:magnesium ion binding"/>
    <property type="evidence" value="ECO:0007669"/>
    <property type="project" value="UniProtKB-UniRule"/>
</dbReference>
<dbReference type="GO" id="GO:0004845">
    <property type="term" value="F:uracil phosphoribosyltransferase activity"/>
    <property type="evidence" value="ECO:0007669"/>
    <property type="project" value="UniProtKB-UniRule"/>
</dbReference>
<dbReference type="GO" id="GO:0044206">
    <property type="term" value="P:UMP salvage"/>
    <property type="evidence" value="ECO:0007669"/>
    <property type="project" value="UniProtKB-UniRule"/>
</dbReference>
<dbReference type="GO" id="GO:0006223">
    <property type="term" value="P:uracil salvage"/>
    <property type="evidence" value="ECO:0007669"/>
    <property type="project" value="InterPro"/>
</dbReference>
<dbReference type="CDD" id="cd06223">
    <property type="entry name" value="PRTases_typeI"/>
    <property type="match status" value="1"/>
</dbReference>
<dbReference type="FunFam" id="3.40.50.2020:FF:000003">
    <property type="entry name" value="Uracil phosphoribosyltransferase"/>
    <property type="match status" value="1"/>
</dbReference>
<dbReference type="Gene3D" id="3.40.50.2020">
    <property type="match status" value="1"/>
</dbReference>
<dbReference type="HAMAP" id="MF_01218_B">
    <property type="entry name" value="Upp_B"/>
    <property type="match status" value="1"/>
</dbReference>
<dbReference type="InterPro" id="IPR000836">
    <property type="entry name" value="PRibTrfase_dom"/>
</dbReference>
<dbReference type="InterPro" id="IPR029057">
    <property type="entry name" value="PRTase-like"/>
</dbReference>
<dbReference type="InterPro" id="IPR034332">
    <property type="entry name" value="Upp_B"/>
</dbReference>
<dbReference type="InterPro" id="IPR050054">
    <property type="entry name" value="UPRTase/APRTase"/>
</dbReference>
<dbReference type="InterPro" id="IPR005765">
    <property type="entry name" value="Ura_phspho_trans"/>
</dbReference>
<dbReference type="NCBIfam" id="NF001097">
    <property type="entry name" value="PRK00129.1"/>
    <property type="match status" value="1"/>
</dbReference>
<dbReference type="NCBIfam" id="TIGR01091">
    <property type="entry name" value="upp"/>
    <property type="match status" value="1"/>
</dbReference>
<dbReference type="PANTHER" id="PTHR32315">
    <property type="entry name" value="ADENINE PHOSPHORIBOSYLTRANSFERASE"/>
    <property type="match status" value="1"/>
</dbReference>
<dbReference type="PANTHER" id="PTHR32315:SF4">
    <property type="entry name" value="URACIL PHOSPHORIBOSYLTRANSFERASE, CHLOROPLASTIC"/>
    <property type="match status" value="1"/>
</dbReference>
<dbReference type="Pfam" id="PF14681">
    <property type="entry name" value="UPRTase"/>
    <property type="match status" value="1"/>
</dbReference>
<dbReference type="SUPFAM" id="SSF53271">
    <property type="entry name" value="PRTase-like"/>
    <property type="match status" value="1"/>
</dbReference>
<keyword id="KW-0021">Allosteric enzyme</keyword>
<keyword id="KW-0328">Glycosyltransferase</keyword>
<keyword id="KW-0342">GTP-binding</keyword>
<keyword id="KW-0460">Magnesium</keyword>
<keyword id="KW-0547">Nucleotide-binding</keyword>
<keyword id="KW-0808">Transferase</keyword>
<sequence>MKIVEVKHPLVKHKLGLMRENDISTKRFRELASEVGSLLTYEATADLETEKVTIEGWNGPVEIDQIKGKKITVVPILRAGLGMMEGVLENVPSARISVVGMYRNEETLEPVPYFQKLVSNIDERMALIVDPMLATGGSVIATIDLLKKAGCSSIKVLVLVAAPEGIAALEKAHPDVELYTASIDQGLNEHGYIIPGLGDAGDKIFGTK</sequence>
<evidence type="ECO:0000255" key="1">
    <source>
        <dbReference type="HAMAP-Rule" id="MF_01218"/>
    </source>
</evidence>
<gene>
    <name evidence="1" type="primary">upp</name>
    <name type="ordered locus">SSPA0345</name>
</gene>
<organism>
    <name type="scientific">Salmonella paratyphi A (strain AKU_12601)</name>
    <dbReference type="NCBI Taxonomy" id="554290"/>
    <lineage>
        <taxon>Bacteria</taxon>
        <taxon>Pseudomonadati</taxon>
        <taxon>Pseudomonadota</taxon>
        <taxon>Gammaproteobacteria</taxon>
        <taxon>Enterobacterales</taxon>
        <taxon>Enterobacteriaceae</taxon>
        <taxon>Salmonella</taxon>
    </lineage>
</organism>
<proteinExistence type="inferred from homology"/>
<feature type="chain" id="PRO_1000139160" description="Uracil phosphoribosyltransferase">
    <location>
        <begin position="1"/>
        <end position="208"/>
    </location>
</feature>
<feature type="binding site" evidence="1">
    <location>
        <position position="78"/>
    </location>
    <ligand>
        <name>5-phospho-alpha-D-ribose 1-diphosphate</name>
        <dbReference type="ChEBI" id="CHEBI:58017"/>
    </ligand>
</feature>
<feature type="binding site" evidence="1">
    <location>
        <position position="103"/>
    </location>
    <ligand>
        <name>5-phospho-alpha-D-ribose 1-diphosphate</name>
        <dbReference type="ChEBI" id="CHEBI:58017"/>
    </ligand>
</feature>
<feature type="binding site" evidence="1">
    <location>
        <begin position="130"/>
        <end position="138"/>
    </location>
    <ligand>
        <name>5-phospho-alpha-D-ribose 1-diphosphate</name>
        <dbReference type="ChEBI" id="CHEBI:58017"/>
    </ligand>
</feature>
<feature type="binding site" evidence="1">
    <location>
        <position position="193"/>
    </location>
    <ligand>
        <name>uracil</name>
        <dbReference type="ChEBI" id="CHEBI:17568"/>
    </ligand>
</feature>
<feature type="binding site" evidence="1">
    <location>
        <begin position="198"/>
        <end position="200"/>
    </location>
    <ligand>
        <name>uracil</name>
        <dbReference type="ChEBI" id="CHEBI:17568"/>
    </ligand>
</feature>
<feature type="binding site" evidence="1">
    <location>
        <position position="199"/>
    </location>
    <ligand>
        <name>5-phospho-alpha-D-ribose 1-diphosphate</name>
        <dbReference type="ChEBI" id="CHEBI:58017"/>
    </ligand>
</feature>
<protein>
    <recommendedName>
        <fullName evidence="1">Uracil phosphoribosyltransferase</fullName>
        <ecNumber evidence="1">2.4.2.9</ecNumber>
    </recommendedName>
    <alternativeName>
        <fullName evidence="1">UMP pyrophosphorylase</fullName>
    </alternativeName>
    <alternativeName>
        <fullName evidence="1">UPRTase</fullName>
    </alternativeName>
</protein>
<accession>B5BB06</accession>
<reference key="1">
    <citation type="journal article" date="2009" name="BMC Genomics">
        <title>Pseudogene accumulation in the evolutionary histories of Salmonella enterica serovars Paratyphi A and Typhi.</title>
        <authorList>
            <person name="Holt K.E."/>
            <person name="Thomson N.R."/>
            <person name="Wain J."/>
            <person name="Langridge G.C."/>
            <person name="Hasan R."/>
            <person name="Bhutta Z.A."/>
            <person name="Quail M.A."/>
            <person name="Norbertczak H."/>
            <person name="Walker D."/>
            <person name="Simmonds M."/>
            <person name="White B."/>
            <person name="Bason N."/>
            <person name="Mungall K."/>
            <person name="Dougan G."/>
            <person name="Parkhill J."/>
        </authorList>
    </citation>
    <scope>NUCLEOTIDE SEQUENCE [LARGE SCALE GENOMIC DNA]</scope>
    <source>
        <strain>AKU_12601</strain>
    </source>
</reference>
<name>UPP_SALPK</name>
<comment type="function">
    <text evidence="1">Catalyzes the conversion of uracil and 5-phospho-alpha-D-ribose 1-diphosphate (PRPP) to UMP and diphosphate.</text>
</comment>
<comment type="catalytic activity">
    <reaction evidence="1">
        <text>UMP + diphosphate = 5-phospho-alpha-D-ribose 1-diphosphate + uracil</text>
        <dbReference type="Rhea" id="RHEA:13017"/>
        <dbReference type="ChEBI" id="CHEBI:17568"/>
        <dbReference type="ChEBI" id="CHEBI:33019"/>
        <dbReference type="ChEBI" id="CHEBI:57865"/>
        <dbReference type="ChEBI" id="CHEBI:58017"/>
        <dbReference type="EC" id="2.4.2.9"/>
    </reaction>
</comment>
<comment type="cofactor">
    <cofactor evidence="1">
        <name>Mg(2+)</name>
        <dbReference type="ChEBI" id="CHEBI:18420"/>
    </cofactor>
    <text evidence="1">Binds 1 Mg(2+) ion per subunit. The magnesium is bound as Mg-PRPP.</text>
</comment>
<comment type="activity regulation">
    <text evidence="1">Allosterically activated by GTP.</text>
</comment>
<comment type="pathway">
    <text evidence="1">Pyrimidine metabolism; UMP biosynthesis via salvage pathway; UMP from uracil: step 1/1.</text>
</comment>
<comment type="similarity">
    <text evidence="1">Belongs to the UPRTase family.</text>
</comment>